<protein>
    <recommendedName>
        <fullName>Apolipoprotein C-IV</fullName>
        <shortName>Apo-CIV</shortName>
        <shortName>ApoC-IV</shortName>
    </recommendedName>
    <alternativeName>
        <fullName>Apolipoprotein C4</fullName>
    </alternativeName>
</protein>
<name>APOC4_PAPAN</name>
<gene>
    <name type="primary">APOC4</name>
</gene>
<sequence length="127" mass="14663">MSLLRNRLQDLPALCLCVLVLACIGACQSEAYEGTPSPPPKLKMSHWSLVTGRMKELLEPVLKRTRDRWQWFWSPSTFRGFMQTYYDDHLRDLGPRTKAWLLKSKESLLNKTHSLCPRIVCGDKDQG</sequence>
<evidence type="ECO:0000250" key="1"/>
<evidence type="ECO:0000250" key="2">
    <source>
        <dbReference type="UniProtKB" id="P55057"/>
    </source>
</evidence>
<evidence type="ECO:0000305" key="3"/>
<reference key="1">
    <citation type="submission" date="2012-03" db="EMBL/GenBank/DDBJ databases">
        <title>Whole genome assembly of Papio anubis.</title>
        <authorList>
            <person name="Liu Y.L."/>
            <person name="Abraham K.A."/>
            <person name="Akbar H.A."/>
            <person name="Ali S.A."/>
            <person name="Anosike U.A."/>
            <person name="Aqrawi P.A."/>
            <person name="Arias F.A."/>
            <person name="Attaway T.A."/>
            <person name="Awwad R.A."/>
            <person name="Babu C.B."/>
            <person name="Bandaranaike D.B."/>
            <person name="Battles P.B."/>
            <person name="Bell A.B."/>
            <person name="Beltran B.B."/>
            <person name="Berhane-Mersha D.B."/>
            <person name="Bess C.B."/>
            <person name="Bickham C.B."/>
            <person name="Bolden T.B."/>
            <person name="Carter K.C."/>
            <person name="Chau D.C."/>
            <person name="Chavez A.C."/>
            <person name="Clerc-Blankenburg K.C."/>
            <person name="Coyle M.C."/>
            <person name="Dao M.D."/>
            <person name="Davila M.L.D."/>
            <person name="Davy-Carroll L.D."/>
            <person name="Denson S.D."/>
            <person name="Dinh H.D."/>
            <person name="Fernandez S.F."/>
            <person name="Fernando P.F."/>
            <person name="Forbes L.F."/>
            <person name="Francis C.F."/>
            <person name="Francisco L.F."/>
            <person name="Fu Q.F."/>
            <person name="Garcia-Iii R.G."/>
            <person name="Garrett T.G."/>
            <person name="Gross S.G."/>
            <person name="Gubbala S.G."/>
            <person name="Hirani K.H."/>
            <person name="Hogues M.H."/>
            <person name="Hollins B.H."/>
            <person name="Jackson L.J."/>
            <person name="Javaid M.J."/>
            <person name="Jhangiani S.J."/>
            <person name="Johnson A.J."/>
            <person name="Johnson B.J."/>
            <person name="Jones J.J."/>
            <person name="Joshi V.J."/>
            <person name="Kalu J.K."/>
            <person name="Khan N.K."/>
            <person name="Korchina V.K."/>
            <person name="Kovar C.K."/>
            <person name="Lago L.L."/>
            <person name="Lara F.L."/>
            <person name="Le T.-K.L."/>
            <person name="Lee S.L."/>
            <person name="Legall-Iii F.L."/>
            <person name="Lemon S.L."/>
            <person name="Liu J.L."/>
            <person name="Liu Y.-S.L."/>
            <person name="Liyanage D.L."/>
            <person name="Lopez J.L."/>
            <person name="Lorensuhewa L.L."/>
            <person name="Mata R.M."/>
            <person name="Mathew T.M."/>
            <person name="Mercado C.M."/>
            <person name="Mercado I.M."/>
            <person name="Morales K.M."/>
            <person name="Morgan M.M."/>
            <person name="Munidasa M.M."/>
            <person name="Ngo D.N."/>
            <person name="Nguyen L.N."/>
            <person name="Nguyen T.N."/>
            <person name="Nguyen N.N."/>
            <person name="Obregon M.O."/>
            <person name="Okwuonu G.O."/>
            <person name="Ongeri F.O."/>
            <person name="Onwere C.O."/>
            <person name="Osifeso I.O."/>
            <person name="Parra A.P."/>
            <person name="Patil S.P."/>
            <person name="Perez A.P."/>
            <person name="Perez Y.P."/>
            <person name="Pham C.P."/>
            <person name="Pu L.-L.P."/>
            <person name="Puazo M.P."/>
            <person name="Quiroz J.Q."/>
            <person name="Rouhana J.R."/>
            <person name="Ruiz M.R."/>
            <person name="Ruiz S.-J.R."/>
            <person name="Saada N.S."/>
            <person name="Santibanez J.S."/>
            <person name="Scheel M.S."/>
            <person name="Schneider B.S."/>
            <person name="Simmons D.S."/>
            <person name="Sisson I.S."/>
            <person name="Tang L.-Y.T."/>
            <person name="Thornton R.T."/>
            <person name="Tisius J.T."/>
            <person name="Toledanes G.T."/>
            <person name="Trejos Z.T."/>
            <person name="Usmani K.U."/>
            <person name="Varghese R.V."/>
            <person name="Vattathil S.V."/>
            <person name="Vee V.V."/>
            <person name="Walker D.W."/>
            <person name="Weissenberger G.W."/>
            <person name="White C.W."/>
            <person name="Williams A.W."/>
            <person name="Woodworth J.W."/>
            <person name="Wright R.W."/>
            <person name="Zhu Y.Z."/>
            <person name="Han Y.H."/>
            <person name="Newsham I.N."/>
            <person name="Nazareth L.N."/>
            <person name="Worley K.W."/>
            <person name="Muzny D.M."/>
            <person name="Rogers J.R."/>
            <person name="Gibbs R.G."/>
        </authorList>
    </citation>
    <scope>NUCLEOTIDE SEQUENCE [LARGE SCALE GENOMIC DNA]</scope>
</reference>
<reference key="2">
    <citation type="unpublished observations" date="2017-04">
        <authorList>
            <person name="Puppione D.L."/>
        </authorList>
    </citation>
    <scope>IDENTIFICATION</scope>
</reference>
<dbReference type="EMBL" id="JH682906">
    <property type="status" value="NOT_ANNOTATED_CDS"/>
    <property type="molecule type" value="Genomic_DNA"/>
</dbReference>
<dbReference type="RefSeq" id="XP_009196974.1">
    <property type="nucleotide sequence ID" value="XM_009198710.2"/>
</dbReference>
<dbReference type="STRING" id="9555.ENSPANP00000019551"/>
<dbReference type="GeneID" id="101020716"/>
<dbReference type="KEGG" id="panu:101020716"/>
<dbReference type="CTD" id="346"/>
<dbReference type="eggNOG" id="ENOG502TE52">
    <property type="taxonomic scope" value="Eukaryota"/>
</dbReference>
<dbReference type="HOGENOM" id="CLU_161459_0_0_1"/>
<dbReference type="Proteomes" id="UP000028761">
    <property type="component" value="Chromosome 20"/>
</dbReference>
<dbReference type="Bgee" id="ENSPANG00000024334">
    <property type="expression patterns" value="Expressed in liver and 45 other cell types or tissues"/>
</dbReference>
<dbReference type="GO" id="GO:0034364">
    <property type="term" value="C:high-density lipoprotein particle"/>
    <property type="evidence" value="ECO:0007669"/>
    <property type="project" value="TreeGrafter"/>
</dbReference>
<dbReference type="GO" id="GO:0034361">
    <property type="term" value="C:very-low-density lipoprotein particle"/>
    <property type="evidence" value="ECO:0007669"/>
    <property type="project" value="TreeGrafter"/>
</dbReference>
<dbReference type="GO" id="GO:0006869">
    <property type="term" value="P:lipid transport"/>
    <property type="evidence" value="ECO:0007669"/>
    <property type="project" value="UniProtKB-KW"/>
</dbReference>
<dbReference type="GO" id="GO:0010890">
    <property type="term" value="P:positive regulation of triglyceride storage"/>
    <property type="evidence" value="ECO:0007669"/>
    <property type="project" value="TreeGrafter"/>
</dbReference>
<dbReference type="GO" id="GO:0070328">
    <property type="term" value="P:triglyceride homeostasis"/>
    <property type="evidence" value="ECO:0007669"/>
    <property type="project" value="TreeGrafter"/>
</dbReference>
<dbReference type="InterPro" id="IPR028120">
    <property type="entry name" value="APOC4"/>
</dbReference>
<dbReference type="PANTHER" id="PTHR32288">
    <property type="entry name" value="APOLIPOPROTEIN C-IV"/>
    <property type="match status" value="1"/>
</dbReference>
<dbReference type="PANTHER" id="PTHR32288:SF0">
    <property type="entry name" value="APOLIPOPROTEIN C-IV"/>
    <property type="match status" value="1"/>
</dbReference>
<dbReference type="Pfam" id="PF15119">
    <property type="entry name" value="APOC4"/>
    <property type="match status" value="1"/>
</dbReference>
<organism>
    <name type="scientific">Papio anubis</name>
    <name type="common">Olive baboon</name>
    <dbReference type="NCBI Taxonomy" id="9555"/>
    <lineage>
        <taxon>Eukaryota</taxon>
        <taxon>Metazoa</taxon>
        <taxon>Chordata</taxon>
        <taxon>Craniata</taxon>
        <taxon>Vertebrata</taxon>
        <taxon>Euteleostomi</taxon>
        <taxon>Mammalia</taxon>
        <taxon>Eutheria</taxon>
        <taxon>Euarchontoglires</taxon>
        <taxon>Primates</taxon>
        <taxon>Haplorrhini</taxon>
        <taxon>Catarrhini</taxon>
        <taxon>Cercopithecidae</taxon>
        <taxon>Cercopithecinae</taxon>
        <taxon>Papio</taxon>
    </lineage>
</organism>
<comment type="function">
    <text evidence="1">May participate in lipoprotein metabolism.</text>
</comment>
<comment type="subcellular location">
    <subcellularLocation>
        <location evidence="1">Secreted</location>
    </subcellularLocation>
</comment>
<comment type="similarity">
    <text evidence="3">Belongs to the apolipoprotein C4 family.</text>
</comment>
<accession>A0A096P2H6</accession>
<keyword id="KW-0445">Lipid transport</keyword>
<keyword id="KW-1185">Reference proteome</keyword>
<keyword id="KW-0964">Secreted</keyword>
<keyword id="KW-0732">Signal</keyword>
<keyword id="KW-0813">Transport</keyword>
<proteinExistence type="inferred from homology"/>
<feature type="signal peptide" evidence="2">
    <location>
        <begin position="1"/>
        <end position="27"/>
    </location>
</feature>
<feature type="chain" id="PRO_5001923239" description="Apolipoprotein C-IV">
    <location>
        <begin position="28"/>
        <end position="127"/>
    </location>
</feature>